<sequence length="128" mass="13808">LFSFKELNEQFKRKIKVVLPVDLVLIIAASFACYCTNMENTYGLEVVGHIPRGIPPPRAPPMNILSAVITEAFGVALVGYAASLALAQGSAKKFKYSVDDNQEFLAHGLSNVISSFLFCIPSAAAMGR</sequence>
<gene>
    <name evidence="6" type="primary">SLC26A7</name>
</gene>
<accession>Q8HY59</accession>
<evidence type="ECO:0000250" key="1">
    <source>
        <dbReference type="UniProtKB" id="Q8R2Z3"/>
    </source>
</evidence>
<evidence type="ECO:0000250" key="2">
    <source>
        <dbReference type="UniProtKB" id="Q8TE54"/>
    </source>
</evidence>
<evidence type="ECO:0000255" key="3"/>
<evidence type="ECO:0000269" key="4">
    <source>
    </source>
</evidence>
<evidence type="ECO:0000305" key="5"/>
<evidence type="ECO:0000312" key="6">
    <source>
        <dbReference type="EMBL" id="AAN86026.1"/>
    </source>
</evidence>
<protein>
    <recommendedName>
        <fullName>Anion exchange transporter</fullName>
    </recommendedName>
    <alternativeName>
        <fullName>Solute carrier family 26 member 7</fullName>
    </alternativeName>
</protein>
<feature type="chain" id="PRO_0000320684" description="Anion exchange transporter">
    <location>
        <begin position="1" status="less than"/>
        <end position="128" status="greater than"/>
    </location>
</feature>
<feature type="topological domain" description="Extracellular" evidence="3">
    <location>
        <begin position="1" status="less than"/>
        <end position="14"/>
    </location>
</feature>
<feature type="transmembrane region" description="Helical" evidence="3">
    <location>
        <begin position="15"/>
        <end position="35"/>
    </location>
</feature>
<feature type="topological domain" description="Cytoplasmic" evidence="3">
    <location>
        <begin position="36"/>
        <end position="66"/>
    </location>
</feature>
<feature type="transmembrane region" description="Helical" evidence="3">
    <location>
        <begin position="67"/>
        <end position="87"/>
    </location>
</feature>
<feature type="topological domain" description="Extracellular" evidence="3">
    <location>
        <begin position="88"/>
        <end position="103"/>
    </location>
</feature>
<feature type="transmembrane region" description="Helical" evidence="3">
    <location>
        <begin position="104"/>
        <end position="124"/>
    </location>
</feature>
<feature type="topological domain" description="Cytoplasmic" evidence="3">
    <location>
        <begin position="125"/>
        <end position="128" status="greater than"/>
    </location>
</feature>
<feature type="non-terminal residue" evidence="6">
    <location>
        <position position="1"/>
    </location>
</feature>
<feature type="non-terminal residue" evidence="6">
    <location>
        <position position="128"/>
    </location>
</feature>
<proteinExistence type="evidence at transcript level"/>
<keyword id="KW-0039">Anion exchange</keyword>
<keyword id="KW-1003">Cell membrane</keyword>
<keyword id="KW-0967">Endosome</keyword>
<keyword id="KW-0406">Ion transport</keyword>
<keyword id="KW-0472">Membrane</keyword>
<keyword id="KW-1185">Reference proteome</keyword>
<keyword id="KW-0812">Transmembrane</keyword>
<keyword id="KW-1133">Transmembrane helix</keyword>
<keyword id="KW-0813">Transport</keyword>
<organism>
    <name type="scientific">Oryctolagus cuniculus</name>
    <name type="common">Rabbit</name>
    <dbReference type="NCBI Taxonomy" id="9986"/>
    <lineage>
        <taxon>Eukaryota</taxon>
        <taxon>Metazoa</taxon>
        <taxon>Chordata</taxon>
        <taxon>Craniata</taxon>
        <taxon>Vertebrata</taxon>
        <taxon>Euteleostomi</taxon>
        <taxon>Mammalia</taxon>
        <taxon>Eutheria</taxon>
        <taxon>Euarchontoglires</taxon>
        <taxon>Glires</taxon>
        <taxon>Lagomorpha</taxon>
        <taxon>Leporidae</taxon>
        <taxon>Oryctolagus</taxon>
    </lineage>
</organism>
<dbReference type="EMBL" id="AY166770">
    <property type="protein sequence ID" value="AAN86026.1"/>
    <property type="molecule type" value="mRNA"/>
</dbReference>
<dbReference type="SMR" id="Q8HY59"/>
<dbReference type="STRING" id="9986.ENSOCUP00000044037"/>
<dbReference type="PaxDb" id="9986-ENSOCUP00000010792"/>
<dbReference type="eggNOG" id="KOG0236">
    <property type="taxonomic scope" value="Eukaryota"/>
</dbReference>
<dbReference type="InParanoid" id="Q8HY59"/>
<dbReference type="Proteomes" id="UP000001811">
    <property type="component" value="Unplaced"/>
</dbReference>
<dbReference type="GO" id="GO:0016324">
    <property type="term" value="C:apical plasma membrane"/>
    <property type="evidence" value="ECO:0000250"/>
    <property type="project" value="UniProtKB"/>
</dbReference>
<dbReference type="GO" id="GO:0016323">
    <property type="term" value="C:basolateral plasma membrane"/>
    <property type="evidence" value="ECO:0000250"/>
    <property type="project" value="UniProtKB"/>
</dbReference>
<dbReference type="GO" id="GO:0016328">
    <property type="term" value="C:lateral plasma membrane"/>
    <property type="evidence" value="ECO:0000250"/>
    <property type="project" value="UniProtKB"/>
</dbReference>
<dbReference type="GO" id="GO:0055038">
    <property type="term" value="C:recycling endosome membrane"/>
    <property type="evidence" value="ECO:0007669"/>
    <property type="project" value="UniProtKB-SubCell"/>
</dbReference>
<dbReference type="GO" id="GO:0140900">
    <property type="term" value="F:chloride:bicarbonate antiporter activity"/>
    <property type="evidence" value="ECO:0000250"/>
    <property type="project" value="UniProtKB"/>
</dbReference>
<dbReference type="GO" id="GO:0015705">
    <property type="term" value="P:iodide transport"/>
    <property type="evidence" value="ECO:0000250"/>
    <property type="project" value="UniProtKB"/>
</dbReference>
<dbReference type="InterPro" id="IPR011547">
    <property type="entry name" value="SLC26A/SulP_dom"/>
</dbReference>
<dbReference type="InterPro" id="IPR001902">
    <property type="entry name" value="SLC26A/SulP_fam"/>
</dbReference>
<dbReference type="PANTHER" id="PTHR11814">
    <property type="entry name" value="SULFATE TRANSPORTER"/>
    <property type="match status" value="1"/>
</dbReference>
<dbReference type="Pfam" id="PF00916">
    <property type="entry name" value="Sulfate_transp"/>
    <property type="match status" value="1"/>
</dbReference>
<comment type="function">
    <text evidence="1 2">Acts as an anion channel mediating the transport of chloride, bromide, iodide, nitrate, sulfate, gluconate, thiocyanate, oxalate and bicarbonate ions (By similarity). Its permeability towards bicarbonate is weak and increases when pH is above 7 (By similarity). Mediates thiocyanate transport in retinal pigment epithelium cells (By similarity). Mediates iodide transport in the thyroid gland, playing an important role in the synthesis of thyroid hormones and the maintenance of thyroid function (By similarity).</text>
</comment>
<comment type="catalytic activity">
    <reaction evidence="1">
        <text>chloride(in) = chloride(out)</text>
        <dbReference type="Rhea" id="RHEA:29823"/>
        <dbReference type="ChEBI" id="CHEBI:17996"/>
    </reaction>
</comment>
<comment type="catalytic activity">
    <reaction evidence="1">
        <text>iodide(out) = iodide(in)</text>
        <dbReference type="Rhea" id="RHEA:66324"/>
        <dbReference type="ChEBI" id="CHEBI:16382"/>
    </reaction>
    <physiologicalReaction direction="right-to-left" evidence="1">
        <dbReference type="Rhea" id="RHEA:66326"/>
    </physiologicalReaction>
</comment>
<comment type="catalytic activity">
    <reaction evidence="1">
        <text>bromide(in) = bromide(out)</text>
        <dbReference type="Rhea" id="RHEA:75383"/>
        <dbReference type="ChEBI" id="CHEBI:15858"/>
    </reaction>
</comment>
<comment type="catalytic activity">
    <reaction evidence="2">
        <text>oxalate(in) = oxalate(out)</text>
        <dbReference type="Rhea" id="RHEA:76199"/>
        <dbReference type="ChEBI" id="CHEBI:30623"/>
    </reaction>
</comment>
<comment type="catalytic activity">
    <reaction evidence="1">
        <text>nitrate(in) = nitrate(out)</text>
        <dbReference type="Rhea" id="RHEA:34923"/>
        <dbReference type="ChEBI" id="CHEBI:17632"/>
    </reaction>
</comment>
<comment type="catalytic activity">
    <reaction evidence="1">
        <text>sulfate(in) = sulfate(out)</text>
        <dbReference type="Rhea" id="RHEA:34983"/>
        <dbReference type="ChEBI" id="CHEBI:16189"/>
    </reaction>
</comment>
<comment type="catalytic activity">
    <reaction evidence="1">
        <text>D-gluconate(in) = D-gluconate(out)</text>
        <dbReference type="Rhea" id="RHEA:76139"/>
        <dbReference type="ChEBI" id="CHEBI:18391"/>
    </reaction>
</comment>
<comment type="catalytic activity">
    <reaction evidence="1">
        <text>thiocyanate(in) = thiocyanate(out)</text>
        <dbReference type="Rhea" id="RHEA:75347"/>
        <dbReference type="ChEBI" id="CHEBI:18022"/>
    </reaction>
</comment>
<comment type="catalytic activity">
    <reaction evidence="1">
        <text>hydrogencarbonate(in) = hydrogencarbonate(out)</text>
        <dbReference type="Rhea" id="RHEA:28695"/>
        <dbReference type="ChEBI" id="CHEBI:17544"/>
    </reaction>
    <physiologicalReaction direction="right-to-left" evidence="1">
        <dbReference type="Rhea" id="RHEA:28697"/>
    </physiologicalReaction>
</comment>
<comment type="catalytic activity">
    <reaction evidence="1">
        <text>hydrogencarbonate(in) + chloride(out) = hydrogencarbonate(out) + chloride(in)</text>
        <dbReference type="Rhea" id="RHEA:72363"/>
        <dbReference type="ChEBI" id="CHEBI:17544"/>
        <dbReference type="ChEBI" id="CHEBI:17996"/>
    </reaction>
</comment>
<comment type="subcellular location">
    <subcellularLocation>
        <location evidence="2">Basolateral cell membrane</location>
        <topology evidence="3">Multi-pass membrane protein</topology>
    </subcellularLocation>
    <subcellularLocation>
        <location evidence="2">Recycling endosome membrane</location>
        <topology evidence="3">Multi-pass membrane protein</topology>
    </subcellularLocation>
    <subcellularLocation>
        <location evidence="2">Apical cell membrane</location>
        <topology evidence="3">Multi-pass membrane protein</topology>
    </subcellularLocation>
    <subcellularLocation>
        <location evidence="2">Lateral cell membrane</location>
        <topology evidence="3">Multi-pass membrane protein</topology>
    </subcellularLocation>
    <text evidence="2">Expressed in the cytoplasm in recycling endosomes of medullary collecting duct cells and in acid-secreting gastric parietal cells. Targeted to the basolateral membrane in hypertonicity and potassium depletion.</text>
</comment>
<comment type="tissue specificity">
    <text evidence="4">Expressed in gastric epithelium, predominantly in the gastric parietal cells but also at lower levels in mucosal cells.</text>
</comment>
<comment type="similarity">
    <text evidence="3">Belongs to the SLC26A/SulP transporter (TC 2.A.53) family.</text>
</comment>
<name>S26A7_RABIT</name>
<reference evidence="5 6" key="1">
    <citation type="journal article" date="2003" name="Am. J. Physiol.">
        <title>Identification of a basolateral Cl-/HCO3- exchanger specific to gastric parietal cells.</title>
        <authorList>
            <person name="Petrovic S."/>
            <person name="Ju X."/>
            <person name="Barone S."/>
            <person name="Seidler U."/>
            <person name="Alper S.L."/>
            <person name="Lohi H."/>
            <person name="Kere J."/>
            <person name="Soleimani M."/>
        </authorList>
    </citation>
    <scope>NUCLEOTIDE SEQUENCE [MRNA]</scope>
    <scope>TISSUE SPECIFICITY</scope>
    <source>
        <tissue evidence="4">Gastric parietal cell</tissue>
    </source>
</reference>